<proteinExistence type="inferred from homology"/>
<keyword id="KW-0007">Acetylation</keyword>
<keyword id="KW-0158">Chromosome</keyword>
<keyword id="KW-0238">DNA-binding</keyword>
<keyword id="KW-0488">Methylation</keyword>
<keyword id="KW-0544">Nucleosome core</keyword>
<keyword id="KW-0539">Nucleus</keyword>
<keyword id="KW-0597">Phosphoprotein</keyword>
<keyword id="KW-1185">Reference proteome</keyword>
<name>H3_EREGS</name>
<accession>Q757N1</accession>
<comment type="function">
    <text evidence="1">Core component of nucleosome. Nucleosomes wrap and compact DNA into chromatin, limiting DNA accessibility to the cellular machineries which require DNA as a template. Histones thereby play a central role in transcription regulation, DNA repair, DNA replication and chromosomal stability. DNA accessibility is regulated via a complex set of post-translational modifications of histones, also called histone code, and nucleosome remodeling (By similarity).</text>
</comment>
<comment type="subunit">
    <text evidence="1">The nucleosome is a histone octamer containing two molecules each of H2A, H2B, H3 and H4 assembled in one H3-H4 heterotetramer and two H2A-H2B heterodimers. The octamer wraps approximately 147 bp of DNA (By similarity).</text>
</comment>
<comment type="subcellular location">
    <subcellularLocation>
        <location evidence="1">Nucleus</location>
    </subcellularLocation>
    <subcellularLocation>
        <location evidence="1">Chromosome</location>
    </subcellularLocation>
</comment>
<comment type="PTM">
    <text evidence="1">Phosphorylated by IPL1 to form H3S10ph. H3S10ph promotes subsequent H3K14ac formation by GCN5 and is required for transcriptional activation through TBP recruitment to the promoters (By similarity).</text>
</comment>
<comment type="PTM">
    <text evidence="1">Mono-, di- and trimethylated by the COMPASS complex to form H3K4me1/2/3. H3K4me activates gene expression by regulating transcription elongation and plays a role in telomere length maintenance. H3K4me enrichment correlates with transcription levels, and occurs in a 5' to 3' gradient with H3K4me3 enrichment at the 5'-end of genes, shifting to H3K4me2 and then H3K4me1. Methylated by SET2 to form H3K36me. H3K36me represses gene expression. Methylated by DOT1 to form H3K79me. H3K79me is required for association of SIR proteins with telomeric regions and for telomeric silencing. The COMPASS-mediated formation of H3K4me2/3 and the DOT1-mediated formation of H3K79me require H2BK123ub1 (By similarity).</text>
</comment>
<comment type="PTM">
    <text evidence="1">Acetylation of histone H3 leads to transcriptional activation. H3K14ac formation by GCN5 is promoted by H3S10ph. H3K14ac can also be formed by ESA1. H3K56ac formation occurs predominantly in newly synthesized H3 molecules during G1, S and G2/M of the cell cycle and may be involved in DNA repair (By similarity).</text>
</comment>
<comment type="similarity">
    <text evidence="3">Belongs to the histone H3 family.</text>
</comment>
<comment type="caution">
    <text evidence="3">To ensure consistency between histone entries, we follow the 'Brno' nomenclature for histone modifications, with positions referring to those used in the literature for the 'closest' model organism. Due to slight variations in histone sequences between organisms and to the presence of initiator methionine in UniProtKB/Swiss-Prot sequences, the actual positions of modified amino acids in the sequence generally differ. In this entry the following conventions are used: H3K4me1/2/3 = mono-, di- and trimethylated Lys-5; H3K9ac = acetylated Lys-10; H3K9me1 = monomethylated Lys-10; H3S10ph = phosphorylated Ser-11; H3K14ac = acetylated Lys-15; H3K14me2 = dimethylated Lys-15; H3K18ac = acetylated Lys-19; H3K18me1 = monomethylated Lys-19; H3K23ac = acetylated Lys-24; H3K23me1 = monomethylated Lys-24; H3K27ac = acetylated Lys-28; H3K27me1/2/3 = mono-, di- and trimethylated Lys-28; H3K36ac = acetylated Lys-37; H3K36me1/2/3 = mono-, di- and trimethylated Lys-37; H3K56ac = acetylated Lys-57; H3K64ac = acetylated Lys-65; H3K79me1/2/3 = mono-, di- and trimethylated Lys-80.</text>
</comment>
<evidence type="ECO:0000250" key="1"/>
<evidence type="ECO:0000256" key="2">
    <source>
        <dbReference type="SAM" id="MobiDB-lite"/>
    </source>
</evidence>
<evidence type="ECO:0000305" key="3"/>
<gene>
    <name type="primary">HHT1</name>
    <name type="ordered locus">ADL202C</name>
</gene>
<gene>
    <name type="primary">HHT2</name>
    <name type="ordered locus">AER013W</name>
</gene>
<organism>
    <name type="scientific">Eremothecium gossypii (strain ATCC 10895 / CBS 109.51 / FGSC 9923 / NRRL Y-1056)</name>
    <name type="common">Yeast</name>
    <name type="synonym">Ashbya gossypii</name>
    <dbReference type="NCBI Taxonomy" id="284811"/>
    <lineage>
        <taxon>Eukaryota</taxon>
        <taxon>Fungi</taxon>
        <taxon>Dikarya</taxon>
        <taxon>Ascomycota</taxon>
        <taxon>Saccharomycotina</taxon>
        <taxon>Saccharomycetes</taxon>
        <taxon>Saccharomycetales</taxon>
        <taxon>Saccharomycetaceae</taxon>
        <taxon>Eremothecium</taxon>
    </lineage>
</organism>
<sequence>MARTKQTARKSTGGKAPRKQLASKAARKSAPSTGGVKKPHRYKPGTVALREIRRFQKSTELLIRKLPFQRLVREIAQDFKTDLRFQSSAIGALQESVEAYLVSLFEDTNLAAIHAKRVTIQKKDIKLARRLRGERS</sequence>
<dbReference type="EMBL" id="AE016817">
    <property type="protein sequence ID" value="AAS51718.1"/>
    <property type="molecule type" value="Genomic_DNA"/>
</dbReference>
<dbReference type="EMBL" id="AE016818">
    <property type="protein sequence ID" value="AAS52697.1"/>
    <property type="molecule type" value="Genomic_DNA"/>
</dbReference>
<dbReference type="RefSeq" id="NP_983894.1">
    <property type="nucleotide sequence ID" value="NM_209247.1"/>
</dbReference>
<dbReference type="RefSeq" id="NP_984873.1">
    <property type="nucleotide sequence ID" value="NM_210227.1"/>
</dbReference>
<dbReference type="SMR" id="Q757N1"/>
<dbReference type="FunCoup" id="Q757N1">
    <property type="interactions" value="1038"/>
</dbReference>
<dbReference type="STRING" id="284811.Q757N1"/>
<dbReference type="EnsemblFungi" id="AAS51718">
    <property type="protein sequence ID" value="AAS51718"/>
    <property type="gene ID" value="AGOS_ADL202C"/>
</dbReference>
<dbReference type="EnsemblFungi" id="AAS52697">
    <property type="protein sequence ID" value="AAS52697"/>
    <property type="gene ID" value="AGOS_AER013W"/>
</dbReference>
<dbReference type="GeneID" id="4620036"/>
<dbReference type="GeneID" id="4621073"/>
<dbReference type="KEGG" id="ago:AGOS_ADL202C"/>
<dbReference type="KEGG" id="ago:AGOS_AER013W"/>
<dbReference type="eggNOG" id="KOG1745">
    <property type="taxonomic scope" value="Eukaryota"/>
</dbReference>
<dbReference type="HOGENOM" id="CLU_078295_4_0_1"/>
<dbReference type="InParanoid" id="Q757N1"/>
<dbReference type="OMA" id="HIFAEMA"/>
<dbReference type="OrthoDB" id="842664at2759"/>
<dbReference type="Proteomes" id="UP000000591">
    <property type="component" value="Chromosome IV"/>
</dbReference>
<dbReference type="Proteomes" id="UP000000591">
    <property type="component" value="Chromosome V"/>
</dbReference>
<dbReference type="GO" id="GO:0043505">
    <property type="term" value="C:CENP-A containing nucleosome"/>
    <property type="evidence" value="ECO:0007669"/>
    <property type="project" value="EnsemblFungi"/>
</dbReference>
<dbReference type="GO" id="GO:0005634">
    <property type="term" value="C:nucleus"/>
    <property type="evidence" value="ECO:0000318"/>
    <property type="project" value="GO_Central"/>
</dbReference>
<dbReference type="GO" id="GO:0000500">
    <property type="term" value="C:RNA polymerase I upstream activating factor complex"/>
    <property type="evidence" value="ECO:0007669"/>
    <property type="project" value="EnsemblFungi"/>
</dbReference>
<dbReference type="GO" id="GO:0008823">
    <property type="term" value="F:cupric reductase (NADH) activity"/>
    <property type="evidence" value="ECO:0007669"/>
    <property type="project" value="EnsemblFungi"/>
</dbReference>
<dbReference type="GO" id="GO:0003677">
    <property type="term" value="F:DNA binding"/>
    <property type="evidence" value="ECO:0007669"/>
    <property type="project" value="UniProtKB-KW"/>
</dbReference>
<dbReference type="GO" id="GO:0046982">
    <property type="term" value="F:protein heterodimerization activity"/>
    <property type="evidence" value="ECO:0007669"/>
    <property type="project" value="InterPro"/>
</dbReference>
<dbReference type="GO" id="GO:0030527">
    <property type="term" value="F:structural constituent of chromatin"/>
    <property type="evidence" value="ECO:0007669"/>
    <property type="project" value="InterPro"/>
</dbReference>
<dbReference type="GO" id="GO:0009060">
    <property type="term" value="P:aerobic respiration"/>
    <property type="evidence" value="ECO:0007669"/>
    <property type="project" value="EnsemblFungi"/>
</dbReference>
<dbReference type="GO" id="GO:0070911">
    <property type="term" value="P:global genome nucleotide-excision repair"/>
    <property type="evidence" value="ECO:0007669"/>
    <property type="project" value="EnsemblFungi"/>
</dbReference>
<dbReference type="GO" id="GO:0006878">
    <property type="term" value="P:intracellular copper ion homeostasis"/>
    <property type="evidence" value="ECO:0007669"/>
    <property type="project" value="EnsemblFungi"/>
</dbReference>
<dbReference type="GO" id="GO:0042790">
    <property type="term" value="P:nucleolar large rRNA transcription by RNA polymerase I"/>
    <property type="evidence" value="ECO:0007669"/>
    <property type="project" value="EnsemblFungi"/>
</dbReference>
<dbReference type="GO" id="GO:0045943">
    <property type="term" value="P:positive regulation of transcription by RNA polymerase I"/>
    <property type="evidence" value="ECO:0007669"/>
    <property type="project" value="EnsemblFungi"/>
</dbReference>
<dbReference type="GO" id="GO:0009303">
    <property type="term" value="P:rRNA transcription"/>
    <property type="evidence" value="ECO:0000318"/>
    <property type="project" value="GO_Central"/>
</dbReference>
<dbReference type="GO" id="GO:0043935">
    <property type="term" value="P:sexual sporulation resulting in formation of a cellular spore"/>
    <property type="evidence" value="ECO:0007669"/>
    <property type="project" value="EnsemblFungi"/>
</dbReference>
<dbReference type="CDD" id="cd22911">
    <property type="entry name" value="HFD_H3"/>
    <property type="match status" value="1"/>
</dbReference>
<dbReference type="FunFam" id="1.10.20.10:FF:000010">
    <property type="entry name" value="Histone H3"/>
    <property type="match status" value="1"/>
</dbReference>
<dbReference type="Gene3D" id="1.10.20.10">
    <property type="entry name" value="Histone, subunit A"/>
    <property type="match status" value="1"/>
</dbReference>
<dbReference type="InterPro" id="IPR009072">
    <property type="entry name" value="Histone-fold"/>
</dbReference>
<dbReference type="InterPro" id="IPR007125">
    <property type="entry name" value="Histone_H2A/H2B/H3"/>
</dbReference>
<dbReference type="InterPro" id="IPR000164">
    <property type="entry name" value="Histone_H3/CENP-A"/>
</dbReference>
<dbReference type="PANTHER" id="PTHR11426">
    <property type="entry name" value="HISTONE H3"/>
    <property type="match status" value="1"/>
</dbReference>
<dbReference type="Pfam" id="PF00125">
    <property type="entry name" value="Histone"/>
    <property type="match status" value="1"/>
</dbReference>
<dbReference type="PRINTS" id="PR00622">
    <property type="entry name" value="HISTONEH3"/>
</dbReference>
<dbReference type="SMART" id="SM00428">
    <property type="entry name" value="H3"/>
    <property type="match status" value="1"/>
</dbReference>
<dbReference type="SUPFAM" id="SSF47113">
    <property type="entry name" value="Histone-fold"/>
    <property type="match status" value="1"/>
</dbReference>
<dbReference type="PROSITE" id="PS00322">
    <property type="entry name" value="HISTONE_H3_1"/>
    <property type="match status" value="1"/>
</dbReference>
<dbReference type="PROSITE" id="PS00959">
    <property type="entry name" value="HISTONE_H3_2"/>
    <property type="match status" value="1"/>
</dbReference>
<reference key="1">
    <citation type="journal article" date="2004" name="Science">
        <title>The Ashbya gossypii genome as a tool for mapping the ancient Saccharomyces cerevisiae genome.</title>
        <authorList>
            <person name="Dietrich F.S."/>
            <person name="Voegeli S."/>
            <person name="Brachat S."/>
            <person name="Lerch A."/>
            <person name="Gates K."/>
            <person name="Steiner S."/>
            <person name="Mohr C."/>
            <person name="Poehlmann R."/>
            <person name="Luedi P."/>
            <person name="Choi S."/>
            <person name="Wing R.A."/>
            <person name="Flavier A."/>
            <person name="Gaffney T.D."/>
            <person name="Philippsen P."/>
        </authorList>
    </citation>
    <scope>NUCLEOTIDE SEQUENCE [LARGE SCALE GENOMIC DNA]</scope>
    <source>
        <strain>ATCC 10895 / CBS 109.51 / FGSC 9923 / NRRL Y-1056</strain>
    </source>
</reference>
<reference key="2">
    <citation type="journal article" date="2013" name="G3 (Bethesda)">
        <title>Genomes of Ashbya fungi isolated from insects reveal four mating-type loci, numerous translocations, lack of transposons, and distinct gene duplications.</title>
        <authorList>
            <person name="Dietrich F.S."/>
            <person name="Voegeli S."/>
            <person name="Kuo S."/>
            <person name="Philippsen P."/>
        </authorList>
    </citation>
    <scope>GENOME REANNOTATION</scope>
    <source>
        <strain>ATCC 10895 / CBS 109.51 / FGSC 9923 / NRRL Y-1056</strain>
    </source>
</reference>
<feature type="initiator methionine" description="Removed" evidence="1">
    <location>
        <position position="1"/>
    </location>
</feature>
<feature type="chain" id="PRO_0000221356" description="Histone H3">
    <location>
        <begin position="2"/>
        <end position="136"/>
    </location>
</feature>
<feature type="region of interest" description="Disordered" evidence="2">
    <location>
        <begin position="1"/>
        <end position="43"/>
    </location>
</feature>
<feature type="modified residue" description="N6,N6,N6-trimethyllysine; alternate" evidence="1">
    <location>
        <position position="5"/>
    </location>
</feature>
<feature type="modified residue" description="N6,N6-dimethyllysine; alternate" evidence="1">
    <location>
        <position position="5"/>
    </location>
</feature>
<feature type="modified residue" description="N6-methyllysine; alternate" evidence="1">
    <location>
        <position position="5"/>
    </location>
</feature>
<feature type="modified residue" description="N6-acetyllysine; alternate" evidence="1">
    <location>
        <position position="10"/>
    </location>
</feature>
<feature type="modified residue" description="N6-methyllysine; alternate" evidence="1">
    <location>
        <position position="10"/>
    </location>
</feature>
<feature type="modified residue" description="Phosphoserine" evidence="1">
    <location>
        <position position="11"/>
    </location>
</feature>
<feature type="modified residue" description="N6,N6-dimethyllysine; alternate" evidence="1">
    <location>
        <position position="15"/>
    </location>
</feature>
<feature type="modified residue" description="N6-acetyllysine; alternate" evidence="1">
    <location>
        <position position="15"/>
    </location>
</feature>
<feature type="modified residue" description="N6-methyllysine; alternate" evidence="1">
    <location>
        <position position="15"/>
    </location>
</feature>
<feature type="modified residue" description="N6-acetyllysine; alternate" evidence="1">
    <location>
        <position position="19"/>
    </location>
</feature>
<feature type="modified residue" description="N6-methyllysine; alternate" evidence="1">
    <location>
        <position position="19"/>
    </location>
</feature>
<feature type="modified residue" description="N6-acetyllysine; alternate" evidence="1">
    <location>
        <position position="24"/>
    </location>
</feature>
<feature type="modified residue" description="N6-methyllysine; alternate" evidence="1">
    <location>
        <position position="24"/>
    </location>
</feature>
<feature type="modified residue" description="N6,N6,N6-trimethyllysine; alternate" evidence="1">
    <location>
        <position position="28"/>
    </location>
</feature>
<feature type="modified residue" description="N6,N6-dimethyllysine; alternate" evidence="1">
    <location>
        <position position="28"/>
    </location>
</feature>
<feature type="modified residue" description="N6-acetyllysine; alternate" evidence="1">
    <location>
        <position position="28"/>
    </location>
</feature>
<feature type="modified residue" description="N6-methyllysine; alternate" evidence="1">
    <location>
        <position position="28"/>
    </location>
</feature>
<feature type="modified residue" description="N6,N6,N6-trimethyllysine; alternate" evidence="1">
    <location>
        <position position="37"/>
    </location>
</feature>
<feature type="modified residue" description="N6,N6-dimethyllysine; alternate" evidence="1">
    <location>
        <position position="37"/>
    </location>
</feature>
<feature type="modified residue" description="N6-acetyllysine; alternate" evidence="1">
    <location>
        <position position="37"/>
    </location>
</feature>
<feature type="modified residue" description="N6-methyllysine; alternate" evidence="1">
    <location>
        <position position="37"/>
    </location>
</feature>
<feature type="modified residue" description="N6-acetyllysine" evidence="1">
    <location>
        <position position="57"/>
    </location>
</feature>
<feature type="modified residue" description="N6-acetyllysine" evidence="1">
    <location>
        <position position="65"/>
    </location>
</feature>
<feature type="modified residue" description="N6,N6,N6-trimethyllysine; alternate" evidence="1">
    <location>
        <position position="80"/>
    </location>
</feature>
<feature type="modified residue" description="N6,N6-dimethyllysine; alternate" evidence="1">
    <location>
        <position position="80"/>
    </location>
</feature>
<feature type="modified residue" description="N6-methyllysine; alternate" evidence="1">
    <location>
        <position position="80"/>
    </location>
</feature>
<protein>
    <recommendedName>
        <fullName>Histone H3</fullName>
    </recommendedName>
</protein>